<name>TGT_MARN8</name>
<evidence type="ECO:0000255" key="1">
    <source>
        <dbReference type="HAMAP-Rule" id="MF_00168"/>
    </source>
</evidence>
<protein>
    <recommendedName>
        <fullName evidence="1">Queuine tRNA-ribosyltransferase</fullName>
        <ecNumber evidence="1">2.4.2.29</ecNumber>
    </recommendedName>
    <alternativeName>
        <fullName evidence="1">Guanine insertion enzyme</fullName>
    </alternativeName>
    <alternativeName>
        <fullName evidence="1">tRNA-guanine transglycosylase</fullName>
    </alternativeName>
</protein>
<gene>
    <name evidence="1" type="primary">tgt</name>
    <name type="ordered locus">Maqu_1114</name>
</gene>
<sequence length="373" mass="41472">MSFEKLGEDGKARRGRLTFPRGVVETPAFMPVGTYGTVKGMLPRDIEEIGAHIILGNTFHLMLRPGTEVVKAHGDLHDFTQWQGPILTDSGGFQVFSLGEMRKITEQGVTFRSPVDGSKVELSPEIAIQVQRDLGSDIVMIFDECTPYPATEKQAKESMELSLRWAERSKRAHEGNPAALFGIVQGGMYESLRDQSLEGLEKIGFDGYAIGGLSVGEPKEDMIRILDHLPPKMPEDKPRYLMGVGRPEDIVEAVRRGVDMFDCVMPTRNARNGYLFTSAGIVKIRNAKNRHDTGPLDERCDCYTCKHFSKSYLHHLDKCGEMLGSQLNTIHNLRFYQNLMSGLRGAIEAGTLSDFVSEFYALRGETVPPLGDS</sequence>
<accession>A1TZN7</accession>
<dbReference type="EC" id="2.4.2.29" evidence="1"/>
<dbReference type="EMBL" id="CP000514">
    <property type="protein sequence ID" value="ABM18206.1"/>
    <property type="molecule type" value="Genomic_DNA"/>
</dbReference>
<dbReference type="RefSeq" id="WP_011784623.1">
    <property type="nucleotide sequence ID" value="NC_008740.1"/>
</dbReference>
<dbReference type="SMR" id="A1TZN7"/>
<dbReference type="STRING" id="351348.Maqu_1114"/>
<dbReference type="KEGG" id="maq:Maqu_1114"/>
<dbReference type="eggNOG" id="COG0343">
    <property type="taxonomic scope" value="Bacteria"/>
</dbReference>
<dbReference type="HOGENOM" id="CLU_022060_0_1_6"/>
<dbReference type="OrthoDB" id="9805417at2"/>
<dbReference type="UniPathway" id="UPA00392"/>
<dbReference type="Proteomes" id="UP000000998">
    <property type="component" value="Chromosome"/>
</dbReference>
<dbReference type="GO" id="GO:0005829">
    <property type="term" value="C:cytosol"/>
    <property type="evidence" value="ECO:0007669"/>
    <property type="project" value="TreeGrafter"/>
</dbReference>
<dbReference type="GO" id="GO:0046872">
    <property type="term" value="F:metal ion binding"/>
    <property type="evidence" value="ECO:0007669"/>
    <property type="project" value="UniProtKB-KW"/>
</dbReference>
<dbReference type="GO" id="GO:0008479">
    <property type="term" value="F:tRNA-guanosine(34) queuine transglycosylase activity"/>
    <property type="evidence" value="ECO:0007669"/>
    <property type="project" value="UniProtKB-UniRule"/>
</dbReference>
<dbReference type="GO" id="GO:0008616">
    <property type="term" value="P:queuosine biosynthetic process"/>
    <property type="evidence" value="ECO:0007669"/>
    <property type="project" value="UniProtKB-UniRule"/>
</dbReference>
<dbReference type="GO" id="GO:0002099">
    <property type="term" value="P:tRNA wobble guanine modification"/>
    <property type="evidence" value="ECO:0007669"/>
    <property type="project" value="TreeGrafter"/>
</dbReference>
<dbReference type="GO" id="GO:0101030">
    <property type="term" value="P:tRNA-guanine transglycosylation"/>
    <property type="evidence" value="ECO:0007669"/>
    <property type="project" value="InterPro"/>
</dbReference>
<dbReference type="FunFam" id="3.20.20.105:FF:000001">
    <property type="entry name" value="Queuine tRNA-ribosyltransferase"/>
    <property type="match status" value="1"/>
</dbReference>
<dbReference type="Gene3D" id="3.20.20.105">
    <property type="entry name" value="Queuine tRNA-ribosyltransferase-like"/>
    <property type="match status" value="1"/>
</dbReference>
<dbReference type="HAMAP" id="MF_00168">
    <property type="entry name" value="Q_tRNA_Tgt"/>
    <property type="match status" value="1"/>
</dbReference>
<dbReference type="InterPro" id="IPR050076">
    <property type="entry name" value="ArchSynthase1/Queuine_TRR"/>
</dbReference>
<dbReference type="InterPro" id="IPR004803">
    <property type="entry name" value="TGT"/>
</dbReference>
<dbReference type="InterPro" id="IPR036511">
    <property type="entry name" value="TGT-like_sf"/>
</dbReference>
<dbReference type="InterPro" id="IPR002616">
    <property type="entry name" value="tRNA_ribo_trans-like"/>
</dbReference>
<dbReference type="NCBIfam" id="TIGR00430">
    <property type="entry name" value="Q_tRNA_tgt"/>
    <property type="match status" value="1"/>
</dbReference>
<dbReference type="NCBIfam" id="TIGR00449">
    <property type="entry name" value="tgt_general"/>
    <property type="match status" value="1"/>
</dbReference>
<dbReference type="PANTHER" id="PTHR46499">
    <property type="entry name" value="QUEUINE TRNA-RIBOSYLTRANSFERASE"/>
    <property type="match status" value="1"/>
</dbReference>
<dbReference type="PANTHER" id="PTHR46499:SF1">
    <property type="entry name" value="QUEUINE TRNA-RIBOSYLTRANSFERASE"/>
    <property type="match status" value="1"/>
</dbReference>
<dbReference type="Pfam" id="PF01702">
    <property type="entry name" value="TGT"/>
    <property type="match status" value="1"/>
</dbReference>
<dbReference type="SUPFAM" id="SSF51713">
    <property type="entry name" value="tRNA-guanine transglycosylase"/>
    <property type="match status" value="1"/>
</dbReference>
<feature type="chain" id="PRO_1000016814" description="Queuine tRNA-ribosyltransferase">
    <location>
        <begin position="1"/>
        <end position="373"/>
    </location>
</feature>
<feature type="region of interest" description="RNA binding" evidence="1">
    <location>
        <begin position="243"/>
        <end position="249"/>
    </location>
</feature>
<feature type="region of interest" description="RNA binding; important for wobble base 34 recognition" evidence="1">
    <location>
        <begin position="267"/>
        <end position="271"/>
    </location>
</feature>
<feature type="active site" description="Proton acceptor" evidence="1">
    <location>
        <position position="89"/>
    </location>
</feature>
<feature type="active site" description="Nucleophile" evidence="1">
    <location>
        <position position="262"/>
    </location>
</feature>
<feature type="binding site" evidence="1">
    <location>
        <begin position="89"/>
        <end position="93"/>
    </location>
    <ligand>
        <name>substrate</name>
    </ligand>
</feature>
<feature type="binding site" evidence="1">
    <location>
        <position position="143"/>
    </location>
    <ligand>
        <name>substrate</name>
    </ligand>
</feature>
<feature type="binding site" evidence="1">
    <location>
        <position position="185"/>
    </location>
    <ligand>
        <name>substrate</name>
    </ligand>
</feature>
<feature type="binding site" evidence="1">
    <location>
        <position position="212"/>
    </location>
    <ligand>
        <name>substrate</name>
    </ligand>
</feature>
<feature type="binding site" evidence="1">
    <location>
        <position position="300"/>
    </location>
    <ligand>
        <name>Zn(2+)</name>
        <dbReference type="ChEBI" id="CHEBI:29105"/>
    </ligand>
</feature>
<feature type="binding site" evidence="1">
    <location>
        <position position="302"/>
    </location>
    <ligand>
        <name>Zn(2+)</name>
        <dbReference type="ChEBI" id="CHEBI:29105"/>
    </ligand>
</feature>
<feature type="binding site" evidence="1">
    <location>
        <position position="305"/>
    </location>
    <ligand>
        <name>Zn(2+)</name>
        <dbReference type="ChEBI" id="CHEBI:29105"/>
    </ligand>
</feature>
<feature type="binding site" evidence="1">
    <location>
        <position position="331"/>
    </location>
    <ligand>
        <name>Zn(2+)</name>
        <dbReference type="ChEBI" id="CHEBI:29105"/>
    </ligand>
</feature>
<organism>
    <name type="scientific">Marinobacter nauticus (strain ATCC 700491 / DSM 11845 / VT8)</name>
    <name type="common">Marinobacter aquaeolei</name>
    <dbReference type="NCBI Taxonomy" id="351348"/>
    <lineage>
        <taxon>Bacteria</taxon>
        <taxon>Pseudomonadati</taxon>
        <taxon>Pseudomonadota</taxon>
        <taxon>Gammaproteobacteria</taxon>
        <taxon>Pseudomonadales</taxon>
        <taxon>Marinobacteraceae</taxon>
        <taxon>Marinobacter</taxon>
    </lineage>
</organism>
<reference key="1">
    <citation type="journal article" date="2011" name="Appl. Environ. Microbiol.">
        <title>Genomic potential of Marinobacter aquaeolei, a biogeochemical 'opportunitroph'.</title>
        <authorList>
            <person name="Singer E."/>
            <person name="Webb E.A."/>
            <person name="Nelson W.C."/>
            <person name="Heidelberg J.F."/>
            <person name="Ivanova N."/>
            <person name="Pati A."/>
            <person name="Edwards K.J."/>
        </authorList>
    </citation>
    <scope>NUCLEOTIDE SEQUENCE [LARGE SCALE GENOMIC DNA]</scope>
    <source>
        <strain>ATCC 700491 / DSM 11845 / VT8</strain>
    </source>
</reference>
<keyword id="KW-0328">Glycosyltransferase</keyword>
<keyword id="KW-0479">Metal-binding</keyword>
<keyword id="KW-0671">Queuosine biosynthesis</keyword>
<keyword id="KW-0808">Transferase</keyword>
<keyword id="KW-0819">tRNA processing</keyword>
<keyword id="KW-0862">Zinc</keyword>
<proteinExistence type="inferred from homology"/>
<comment type="function">
    <text evidence="1">Catalyzes the base-exchange of a guanine (G) residue with the queuine precursor 7-aminomethyl-7-deazaguanine (PreQ1) at position 34 (anticodon wobble position) in tRNAs with GU(N) anticodons (tRNA-Asp, -Asn, -His and -Tyr). Catalysis occurs through a double-displacement mechanism. The nucleophile active site attacks the C1' of nucleotide 34 to detach the guanine base from the RNA, forming a covalent enzyme-RNA intermediate. The proton acceptor active site deprotonates the incoming PreQ1, allowing a nucleophilic attack on the C1' of the ribose to form the product. After dissociation, two additional enzymatic reactions on the tRNA convert PreQ1 to queuine (Q), resulting in the hypermodified nucleoside queuosine (7-(((4,5-cis-dihydroxy-2-cyclopenten-1-yl)amino)methyl)-7-deazaguanosine).</text>
</comment>
<comment type="catalytic activity">
    <reaction evidence="1">
        <text>7-aminomethyl-7-carbaguanine + guanosine(34) in tRNA = 7-aminomethyl-7-carbaguanosine(34) in tRNA + guanine</text>
        <dbReference type="Rhea" id="RHEA:24104"/>
        <dbReference type="Rhea" id="RHEA-COMP:10341"/>
        <dbReference type="Rhea" id="RHEA-COMP:10342"/>
        <dbReference type="ChEBI" id="CHEBI:16235"/>
        <dbReference type="ChEBI" id="CHEBI:58703"/>
        <dbReference type="ChEBI" id="CHEBI:74269"/>
        <dbReference type="ChEBI" id="CHEBI:82833"/>
        <dbReference type="EC" id="2.4.2.29"/>
    </reaction>
</comment>
<comment type="cofactor">
    <cofactor evidence="1">
        <name>Zn(2+)</name>
        <dbReference type="ChEBI" id="CHEBI:29105"/>
    </cofactor>
    <text evidence="1">Binds 1 zinc ion per subunit.</text>
</comment>
<comment type="pathway">
    <text evidence="1">tRNA modification; tRNA-queuosine biosynthesis.</text>
</comment>
<comment type="subunit">
    <text evidence="1">Homodimer. Within each dimer, one monomer is responsible for RNA recognition and catalysis, while the other monomer binds to the replacement base PreQ1.</text>
</comment>
<comment type="similarity">
    <text evidence="1">Belongs to the queuine tRNA-ribosyltransferase family.</text>
</comment>